<evidence type="ECO:0000255" key="1">
    <source>
        <dbReference type="HAMAP-Rule" id="MF_00228"/>
    </source>
</evidence>
<keyword id="KW-0067">ATP-binding</keyword>
<keyword id="KW-0418">Kinase</keyword>
<keyword id="KW-0460">Magnesium</keyword>
<keyword id="KW-0479">Metal-binding</keyword>
<keyword id="KW-0547">Nucleotide-binding</keyword>
<keyword id="KW-0784">Thiamine biosynthesis</keyword>
<keyword id="KW-0808">Transferase</keyword>
<proteinExistence type="inferred from homology"/>
<comment type="function">
    <text evidence="1">Catalyzes the phosphorylation of the hydroxyl group of 4-methyl-5-beta-hydroxyethylthiazole (THZ).</text>
</comment>
<comment type="catalytic activity">
    <reaction evidence="1">
        <text>5-(2-hydroxyethyl)-4-methylthiazole + ATP = 4-methyl-5-(2-phosphooxyethyl)-thiazole + ADP + H(+)</text>
        <dbReference type="Rhea" id="RHEA:24212"/>
        <dbReference type="ChEBI" id="CHEBI:15378"/>
        <dbReference type="ChEBI" id="CHEBI:17957"/>
        <dbReference type="ChEBI" id="CHEBI:30616"/>
        <dbReference type="ChEBI" id="CHEBI:58296"/>
        <dbReference type="ChEBI" id="CHEBI:456216"/>
        <dbReference type="EC" id="2.7.1.50"/>
    </reaction>
</comment>
<comment type="cofactor">
    <cofactor evidence="1">
        <name>Mg(2+)</name>
        <dbReference type="ChEBI" id="CHEBI:18420"/>
    </cofactor>
</comment>
<comment type="pathway">
    <text evidence="1">Cofactor biosynthesis; thiamine diphosphate biosynthesis; 4-methyl-5-(2-phosphoethyl)-thiazole from 5-(2-hydroxyethyl)-4-methylthiazole: step 1/1.</text>
</comment>
<comment type="similarity">
    <text evidence="1">Belongs to the Thz kinase family.</text>
</comment>
<organism>
    <name type="scientific">Bacillus anthracis (strain CDC 684 / NRRL 3495)</name>
    <dbReference type="NCBI Taxonomy" id="568206"/>
    <lineage>
        <taxon>Bacteria</taxon>
        <taxon>Bacillati</taxon>
        <taxon>Bacillota</taxon>
        <taxon>Bacilli</taxon>
        <taxon>Bacillales</taxon>
        <taxon>Bacillaceae</taxon>
        <taxon>Bacillus</taxon>
        <taxon>Bacillus cereus group</taxon>
    </lineage>
</organism>
<reference key="1">
    <citation type="submission" date="2008-10" db="EMBL/GenBank/DDBJ databases">
        <title>Genome sequence of Bacillus anthracis str. CDC 684.</title>
        <authorList>
            <person name="Dodson R.J."/>
            <person name="Munk A.C."/>
            <person name="Brettin T."/>
            <person name="Bruce D."/>
            <person name="Detter C."/>
            <person name="Tapia R."/>
            <person name="Han C."/>
            <person name="Sutton G."/>
            <person name="Sims D."/>
        </authorList>
    </citation>
    <scope>NUCLEOTIDE SEQUENCE [LARGE SCALE GENOMIC DNA]</scope>
    <source>
        <strain>CDC 684 / NRRL 3495</strain>
    </source>
</reference>
<feature type="chain" id="PRO_1000198103" description="Hydroxyethylthiazole kinase">
    <location>
        <begin position="1"/>
        <end position="268"/>
    </location>
</feature>
<feature type="binding site" evidence="1">
    <location>
        <position position="45"/>
    </location>
    <ligand>
        <name>substrate</name>
    </ligand>
</feature>
<feature type="binding site" evidence="1">
    <location>
        <position position="121"/>
    </location>
    <ligand>
        <name>ATP</name>
        <dbReference type="ChEBI" id="CHEBI:30616"/>
    </ligand>
</feature>
<feature type="binding site" evidence="1">
    <location>
        <position position="167"/>
    </location>
    <ligand>
        <name>ATP</name>
        <dbReference type="ChEBI" id="CHEBI:30616"/>
    </ligand>
</feature>
<feature type="binding site" evidence="1">
    <location>
        <position position="194"/>
    </location>
    <ligand>
        <name>substrate</name>
    </ligand>
</feature>
<accession>C3L626</accession>
<name>THIM_BACAC</name>
<dbReference type="EC" id="2.7.1.50" evidence="1"/>
<dbReference type="EMBL" id="CP001215">
    <property type="protein sequence ID" value="ACP12342.1"/>
    <property type="molecule type" value="Genomic_DNA"/>
</dbReference>
<dbReference type="RefSeq" id="WP_001092689.1">
    <property type="nucleotide sequence ID" value="NC_012581.1"/>
</dbReference>
<dbReference type="SMR" id="C3L626"/>
<dbReference type="GeneID" id="45020435"/>
<dbReference type="KEGG" id="bah:BAMEG_0442"/>
<dbReference type="HOGENOM" id="CLU_019943_0_1_9"/>
<dbReference type="UniPathway" id="UPA00060">
    <property type="reaction ID" value="UER00139"/>
</dbReference>
<dbReference type="GO" id="GO:0005524">
    <property type="term" value="F:ATP binding"/>
    <property type="evidence" value="ECO:0007669"/>
    <property type="project" value="UniProtKB-UniRule"/>
</dbReference>
<dbReference type="GO" id="GO:0004417">
    <property type="term" value="F:hydroxyethylthiazole kinase activity"/>
    <property type="evidence" value="ECO:0007669"/>
    <property type="project" value="UniProtKB-UniRule"/>
</dbReference>
<dbReference type="GO" id="GO:0000287">
    <property type="term" value="F:magnesium ion binding"/>
    <property type="evidence" value="ECO:0007669"/>
    <property type="project" value="UniProtKB-UniRule"/>
</dbReference>
<dbReference type="GO" id="GO:0009228">
    <property type="term" value="P:thiamine biosynthetic process"/>
    <property type="evidence" value="ECO:0007669"/>
    <property type="project" value="UniProtKB-KW"/>
</dbReference>
<dbReference type="GO" id="GO:0009229">
    <property type="term" value="P:thiamine diphosphate biosynthetic process"/>
    <property type="evidence" value="ECO:0007669"/>
    <property type="project" value="UniProtKB-UniRule"/>
</dbReference>
<dbReference type="CDD" id="cd01170">
    <property type="entry name" value="THZ_kinase"/>
    <property type="match status" value="1"/>
</dbReference>
<dbReference type="FunFam" id="3.40.1190.20:FF:000027">
    <property type="entry name" value="Hydroxyethylthiazole kinase"/>
    <property type="match status" value="1"/>
</dbReference>
<dbReference type="Gene3D" id="3.40.1190.20">
    <property type="match status" value="1"/>
</dbReference>
<dbReference type="HAMAP" id="MF_00228">
    <property type="entry name" value="Thz_kinase"/>
    <property type="match status" value="1"/>
</dbReference>
<dbReference type="InterPro" id="IPR000417">
    <property type="entry name" value="Hyethyz_kinase"/>
</dbReference>
<dbReference type="InterPro" id="IPR029056">
    <property type="entry name" value="Ribokinase-like"/>
</dbReference>
<dbReference type="NCBIfam" id="NF006830">
    <property type="entry name" value="PRK09355.1"/>
    <property type="match status" value="1"/>
</dbReference>
<dbReference type="NCBIfam" id="TIGR00694">
    <property type="entry name" value="thiM"/>
    <property type="match status" value="1"/>
</dbReference>
<dbReference type="Pfam" id="PF02110">
    <property type="entry name" value="HK"/>
    <property type="match status" value="1"/>
</dbReference>
<dbReference type="PIRSF" id="PIRSF000513">
    <property type="entry name" value="Thz_kinase"/>
    <property type="match status" value="1"/>
</dbReference>
<dbReference type="PRINTS" id="PR01099">
    <property type="entry name" value="HYETHTZKNASE"/>
</dbReference>
<dbReference type="SUPFAM" id="SSF53613">
    <property type="entry name" value="Ribokinase-like"/>
    <property type="match status" value="1"/>
</dbReference>
<sequence>MNTKEISKVVDLVRESNPLVHNITNVVVTNFTANGLLALGASPVMAYAKEEVAEMASIAGALVLNMGTLRPDEVEAMLLAGKSANRNDVPVLFDPVGAGATSYRTEVARHIPAEIELAIIRGNAAEIANVINEKWEIKGVDAGAGNGNVVSIAKQAADELNTVAVITGKEDVVTDGERTIVIRNGHSILTKITGTGCLLTSVIGAFVAVEKDYVKAAVAALTFYGVAAELAAAKTVEKGPGSFQIEFLNQLANTTSGDIEKYGKIEVI</sequence>
<gene>
    <name evidence="1" type="primary">thiM</name>
    <name type="ordered locus">BAMEG_0442</name>
</gene>
<protein>
    <recommendedName>
        <fullName evidence="1">Hydroxyethylthiazole kinase</fullName>
        <ecNumber evidence="1">2.7.1.50</ecNumber>
    </recommendedName>
    <alternativeName>
        <fullName evidence="1">4-methyl-5-beta-hydroxyethylthiazole kinase</fullName>
        <shortName evidence="1">TH kinase</shortName>
        <shortName evidence="1">Thz kinase</shortName>
    </alternativeName>
</protein>